<name>GLPE_ALISL</name>
<keyword id="KW-0963">Cytoplasm</keyword>
<keyword id="KW-0808">Transferase</keyword>
<sequence>MEQFQHISVTDAQEKLNQKDHNARMVDIRDPQSFGRGHVDGAFHLTNDTIVTLMNEVEFEQPVLVMCYHGHSSQGAAQYLINQGYEEVYSVDGGFEGWNKAGLPVEK</sequence>
<accession>B6ENU6</accession>
<proteinExistence type="inferred from homology"/>
<comment type="function">
    <text evidence="1">Transferase that catalyzes the transfer of sulfur from thiosulfate to thiophilic acceptors such as cyanide or dithiols. May function in a CysM-independent thiosulfate assimilation pathway by catalyzing the conversion of thiosulfate to sulfite, which can then be used for L-cysteine biosynthesis.</text>
</comment>
<comment type="catalytic activity">
    <reaction evidence="1">
        <text>thiosulfate + hydrogen cyanide = thiocyanate + sulfite + 2 H(+)</text>
        <dbReference type="Rhea" id="RHEA:16881"/>
        <dbReference type="ChEBI" id="CHEBI:15378"/>
        <dbReference type="ChEBI" id="CHEBI:17359"/>
        <dbReference type="ChEBI" id="CHEBI:18022"/>
        <dbReference type="ChEBI" id="CHEBI:18407"/>
        <dbReference type="ChEBI" id="CHEBI:33542"/>
        <dbReference type="EC" id="2.8.1.1"/>
    </reaction>
</comment>
<comment type="catalytic activity">
    <reaction evidence="1">
        <text>thiosulfate + [thioredoxin]-dithiol = [thioredoxin]-disulfide + hydrogen sulfide + sulfite + 2 H(+)</text>
        <dbReference type="Rhea" id="RHEA:83859"/>
        <dbReference type="Rhea" id="RHEA-COMP:10698"/>
        <dbReference type="Rhea" id="RHEA-COMP:10700"/>
        <dbReference type="ChEBI" id="CHEBI:15378"/>
        <dbReference type="ChEBI" id="CHEBI:17359"/>
        <dbReference type="ChEBI" id="CHEBI:29919"/>
        <dbReference type="ChEBI" id="CHEBI:29950"/>
        <dbReference type="ChEBI" id="CHEBI:33542"/>
        <dbReference type="ChEBI" id="CHEBI:50058"/>
    </reaction>
</comment>
<comment type="subcellular location">
    <subcellularLocation>
        <location evidence="1">Cytoplasm</location>
    </subcellularLocation>
</comment>
<comment type="similarity">
    <text evidence="1">Belongs to the GlpE family.</text>
</comment>
<evidence type="ECO:0000255" key="1">
    <source>
        <dbReference type="HAMAP-Rule" id="MF_01009"/>
    </source>
</evidence>
<gene>
    <name evidence="1" type="primary">glpE</name>
    <name type="ordered locus">VSAL_I2899</name>
</gene>
<organism>
    <name type="scientific">Aliivibrio salmonicida (strain LFI1238)</name>
    <name type="common">Vibrio salmonicida (strain LFI1238)</name>
    <dbReference type="NCBI Taxonomy" id="316275"/>
    <lineage>
        <taxon>Bacteria</taxon>
        <taxon>Pseudomonadati</taxon>
        <taxon>Pseudomonadota</taxon>
        <taxon>Gammaproteobacteria</taxon>
        <taxon>Vibrionales</taxon>
        <taxon>Vibrionaceae</taxon>
        <taxon>Aliivibrio</taxon>
    </lineage>
</organism>
<dbReference type="EC" id="2.8.1.1" evidence="1"/>
<dbReference type="EMBL" id="FM178379">
    <property type="protein sequence ID" value="CAQ80583.1"/>
    <property type="molecule type" value="Genomic_DNA"/>
</dbReference>
<dbReference type="RefSeq" id="WP_012551317.1">
    <property type="nucleotide sequence ID" value="NC_011312.1"/>
</dbReference>
<dbReference type="SMR" id="B6ENU6"/>
<dbReference type="KEGG" id="vsa:VSAL_I2899"/>
<dbReference type="eggNOG" id="COG0607">
    <property type="taxonomic scope" value="Bacteria"/>
</dbReference>
<dbReference type="HOGENOM" id="CLU_089574_14_0_6"/>
<dbReference type="Proteomes" id="UP000001730">
    <property type="component" value="Chromosome 1"/>
</dbReference>
<dbReference type="GO" id="GO:0005737">
    <property type="term" value="C:cytoplasm"/>
    <property type="evidence" value="ECO:0007669"/>
    <property type="project" value="UniProtKB-SubCell"/>
</dbReference>
<dbReference type="GO" id="GO:0004792">
    <property type="term" value="F:thiosulfate-cyanide sulfurtransferase activity"/>
    <property type="evidence" value="ECO:0007669"/>
    <property type="project" value="UniProtKB-UniRule"/>
</dbReference>
<dbReference type="GO" id="GO:0006071">
    <property type="term" value="P:glycerol metabolic process"/>
    <property type="evidence" value="ECO:0007669"/>
    <property type="project" value="UniProtKB-UniRule"/>
</dbReference>
<dbReference type="CDD" id="cd01444">
    <property type="entry name" value="GlpE_ST"/>
    <property type="match status" value="1"/>
</dbReference>
<dbReference type="Gene3D" id="3.40.250.10">
    <property type="entry name" value="Rhodanese-like domain"/>
    <property type="match status" value="1"/>
</dbReference>
<dbReference type="HAMAP" id="MF_01009">
    <property type="entry name" value="Thiosulf_sulfurtr"/>
    <property type="match status" value="1"/>
</dbReference>
<dbReference type="InterPro" id="IPR050229">
    <property type="entry name" value="GlpE_sulfurtransferase"/>
</dbReference>
<dbReference type="InterPro" id="IPR001763">
    <property type="entry name" value="Rhodanese-like_dom"/>
</dbReference>
<dbReference type="InterPro" id="IPR036873">
    <property type="entry name" value="Rhodanese-like_dom_sf"/>
</dbReference>
<dbReference type="InterPro" id="IPR023695">
    <property type="entry name" value="Thiosulf_sulfurTrfase"/>
</dbReference>
<dbReference type="NCBIfam" id="NF001195">
    <property type="entry name" value="PRK00162.1"/>
    <property type="match status" value="1"/>
</dbReference>
<dbReference type="PANTHER" id="PTHR43031">
    <property type="entry name" value="FAD-DEPENDENT OXIDOREDUCTASE"/>
    <property type="match status" value="1"/>
</dbReference>
<dbReference type="PANTHER" id="PTHR43031:SF6">
    <property type="entry name" value="THIOSULFATE SULFURTRANSFERASE GLPE"/>
    <property type="match status" value="1"/>
</dbReference>
<dbReference type="Pfam" id="PF00581">
    <property type="entry name" value="Rhodanese"/>
    <property type="match status" value="1"/>
</dbReference>
<dbReference type="SMART" id="SM00450">
    <property type="entry name" value="RHOD"/>
    <property type="match status" value="1"/>
</dbReference>
<dbReference type="SUPFAM" id="SSF52821">
    <property type="entry name" value="Rhodanese/Cell cycle control phosphatase"/>
    <property type="match status" value="1"/>
</dbReference>
<dbReference type="PROSITE" id="PS50206">
    <property type="entry name" value="RHODANESE_3"/>
    <property type="match status" value="1"/>
</dbReference>
<reference key="1">
    <citation type="journal article" date="2008" name="BMC Genomics">
        <title>The genome sequence of the fish pathogen Aliivibrio salmonicida strain LFI1238 shows extensive evidence of gene decay.</title>
        <authorList>
            <person name="Hjerde E."/>
            <person name="Lorentzen M.S."/>
            <person name="Holden M.T."/>
            <person name="Seeger K."/>
            <person name="Paulsen S."/>
            <person name="Bason N."/>
            <person name="Churcher C."/>
            <person name="Harris D."/>
            <person name="Norbertczak H."/>
            <person name="Quail M.A."/>
            <person name="Sanders S."/>
            <person name="Thurston S."/>
            <person name="Parkhill J."/>
            <person name="Willassen N.P."/>
            <person name="Thomson N.R."/>
        </authorList>
    </citation>
    <scope>NUCLEOTIDE SEQUENCE [LARGE SCALE GENOMIC DNA]</scope>
    <source>
        <strain>LFI1238</strain>
    </source>
</reference>
<protein>
    <recommendedName>
        <fullName evidence="1">Thiosulfate sulfurtransferase GlpE</fullName>
        <ecNumber evidence="1">2.8.1.1</ecNumber>
    </recommendedName>
</protein>
<feature type="chain" id="PRO_1000134845" description="Thiosulfate sulfurtransferase GlpE">
    <location>
        <begin position="1"/>
        <end position="107"/>
    </location>
</feature>
<feature type="domain" description="Rhodanese" evidence="1">
    <location>
        <begin position="19"/>
        <end position="107"/>
    </location>
</feature>
<feature type="active site" description="Cysteine persulfide intermediate" evidence="1">
    <location>
        <position position="67"/>
    </location>
</feature>